<sequence length="625" mass="72514">MPAVLRTRSKESSIEQKPASRTRTRSRRGKRGRDDDDDDDDEESDDAYDEVGNDYDEYASRAKLATNRPFEIVAGLPASVELPNYNSSLTHPQSIKNSGVLYDSLVSSRRTWVQGEMFELYWRRPKKIVSESTPAATESPTSGTIPLIRDKMQKMCDCVMSGGPHTFKVRLFILKNDKIEQKWQDEQELKKKEKELKRKNDAEAKRLRMEERKRQQMQKKIAKEQKLQLQKENKAKQKLEQEALKLKRKEEMKKLKEQNKNKQGSPSSSMHDPRMIMNLNLMAQEDPKLNTLMETVAKGLANNSQLEEFKKFIEIAKKRSLEENPVNKRPSVTTTRPAPPSKAKDVAEDHRLNSITLVKSSKTAATEPEPKKADDENAEKQQSKEAKTTAESTQVDVKKEEEDVKEKGVKSEDTQKKEDNQVVPKRKRRKNAIKEDKDMQLTAFQQKYVQGAEIILEYLEFTHSRYYLPKKSVVEFLEDTDEIIISWIVIHNSKEIEKFKTKKIKAKLKADQKLNKEDAKPGSDVEKEVSFNPLFEADCPTPLYTPMTMKLSGIHKRFNQIIRNSVSPMEEVVKEMEKILQIGTRLSGYNLWYQLDGYDDEALSESLRFELNEWEHAMRSRRHKR</sequence>
<organism>
    <name type="scientific">Saccharomyces cerevisiae (strain ATCC 204508 / S288c)</name>
    <name type="common">Baker's yeast</name>
    <dbReference type="NCBI Taxonomy" id="559292"/>
    <lineage>
        <taxon>Eukaryota</taxon>
        <taxon>Fungi</taxon>
        <taxon>Dikarya</taxon>
        <taxon>Ascomycota</taxon>
        <taxon>Saccharomycotina</taxon>
        <taxon>Saccharomycetes</taxon>
        <taxon>Saccharomycetales</taxon>
        <taxon>Saccharomycetaceae</taxon>
        <taxon>Saccharomyces</taxon>
    </lineage>
</organism>
<keyword id="KW-0002">3D-structure</keyword>
<keyword id="KW-0010">Activator</keyword>
<keyword id="KW-0156">Chromatin regulator</keyword>
<keyword id="KW-0539">Nucleus</keyword>
<keyword id="KW-1185">Reference proteome</keyword>
<keyword id="KW-0804">Transcription</keyword>
<keyword id="KW-0805">Transcription regulation</keyword>
<feature type="chain" id="PRO_0000072344" description="SWR1-complex protein 3">
    <location>
        <begin position="1"/>
        <end position="625"/>
    </location>
</feature>
<feature type="region of interest" description="Disordered" evidence="1">
    <location>
        <begin position="1"/>
        <end position="53"/>
    </location>
</feature>
<feature type="region of interest" description="Disordered" evidence="1">
    <location>
        <begin position="194"/>
        <end position="234"/>
    </location>
</feature>
<feature type="region of interest" description="Disordered" evidence="1">
    <location>
        <begin position="254"/>
        <end position="273"/>
    </location>
</feature>
<feature type="region of interest" description="Disordered" evidence="1">
    <location>
        <begin position="324"/>
        <end position="434"/>
    </location>
</feature>
<feature type="compositionally biased region" description="Basic residues" evidence="1">
    <location>
        <begin position="20"/>
        <end position="31"/>
    </location>
</feature>
<feature type="compositionally biased region" description="Acidic residues" evidence="1">
    <location>
        <begin position="35"/>
        <end position="53"/>
    </location>
</feature>
<feature type="compositionally biased region" description="Basic and acidic residues" evidence="1">
    <location>
        <begin position="194"/>
        <end position="214"/>
    </location>
</feature>
<feature type="compositionally biased region" description="Basic and acidic residues" evidence="1">
    <location>
        <begin position="221"/>
        <end position="234"/>
    </location>
</feature>
<feature type="compositionally biased region" description="Polar residues" evidence="1">
    <location>
        <begin position="261"/>
        <end position="270"/>
    </location>
</feature>
<feature type="compositionally biased region" description="Basic and acidic residues" evidence="1">
    <location>
        <begin position="342"/>
        <end position="352"/>
    </location>
</feature>
<feature type="compositionally biased region" description="Polar residues" evidence="1">
    <location>
        <begin position="353"/>
        <end position="364"/>
    </location>
</feature>
<feature type="compositionally biased region" description="Basic and acidic residues" evidence="1">
    <location>
        <begin position="368"/>
        <end position="388"/>
    </location>
</feature>
<feature type="compositionally biased region" description="Basic and acidic residues" evidence="1">
    <location>
        <begin position="396"/>
        <end position="420"/>
    </location>
</feature>
<reference key="1">
    <citation type="journal article" date="1993" name="Genome">
        <title>Sequencing of chromosome I from Saccharomyces cerevisiae: analysis of a 32 kb region between the LTE1 and SPO7 genes.</title>
        <authorList>
            <person name="Ouellette B.F.F."/>
            <person name="Clark M.W."/>
            <person name="Keng T."/>
            <person name="Storms R.K."/>
            <person name="Zhong W.-W."/>
            <person name="Zeng B."/>
            <person name="Fortin N."/>
            <person name="Delaney S."/>
            <person name="Barton A.B."/>
            <person name="Kaback D.B."/>
            <person name="Bussey H."/>
        </authorList>
    </citation>
    <scope>NUCLEOTIDE SEQUENCE [GENOMIC DNA]</scope>
    <source>
        <strain>ATCC 204511 / S288c / AB972</strain>
    </source>
</reference>
<reference key="2">
    <citation type="journal article" date="1995" name="Proc. Natl. Acad. Sci. U.S.A.">
        <title>The nucleotide sequence of chromosome I from Saccharomyces cerevisiae.</title>
        <authorList>
            <person name="Bussey H."/>
            <person name="Kaback D.B."/>
            <person name="Zhong W.-W."/>
            <person name="Vo D.H."/>
            <person name="Clark M.W."/>
            <person name="Fortin N."/>
            <person name="Hall J."/>
            <person name="Ouellette B.F.F."/>
            <person name="Keng T."/>
            <person name="Barton A.B."/>
            <person name="Su Y."/>
            <person name="Davies C.J."/>
            <person name="Storms R.K."/>
        </authorList>
    </citation>
    <scope>NUCLEOTIDE SEQUENCE [LARGE SCALE GENOMIC DNA]</scope>
    <source>
        <strain>ATCC 204508 / S288c</strain>
    </source>
</reference>
<reference key="3">
    <citation type="journal article" date="2014" name="G3 (Bethesda)">
        <title>The reference genome sequence of Saccharomyces cerevisiae: Then and now.</title>
        <authorList>
            <person name="Engel S.R."/>
            <person name="Dietrich F.S."/>
            <person name="Fisk D.G."/>
            <person name="Binkley G."/>
            <person name="Balakrishnan R."/>
            <person name="Costanzo M.C."/>
            <person name="Dwight S.S."/>
            <person name="Hitz B.C."/>
            <person name="Karra K."/>
            <person name="Nash R.S."/>
            <person name="Weng S."/>
            <person name="Wong E.D."/>
            <person name="Lloyd P."/>
            <person name="Skrzypek M.S."/>
            <person name="Miyasato S.R."/>
            <person name="Simison M."/>
            <person name="Cherry J.M."/>
        </authorList>
    </citation>
    <scope>GENOME REANNOTATION</scope>
    <source>
        <strain>ATCC 204508 / S288c</strain>
    </source>
</reference>
<reference key="4">
    <citation type="journal article" date="2003" name="Mol. Cell">
        <title>A Snf2 family ATPase complex required for recruitment of the histone H2A variant Htz1.</title>
        <authorList>
            <person name="Krogan N.J."/>
            <person name="Keogh M.-C."/>
            <person name="Datta N."/>
            <person name="Sawa C."/>
            <person name="Ryan O.W."/>
            <person name="Ding H."/>
            <person name="Haw R.A."/>
            <person name="Pootoolal J."/>
            <person name="Tong A."/>
            <person name="Canadien V."/>
            <person name="Richards D.P."/>
            <person name="Wu X."/>
            <person name="Emili A."/>
            <person name="Hughes T.R."/>
            <person name="Buratowski S."/>
            <person name="Greenblatt J.F."/>
        </authorList>
    </citation>
    <scope>IDENTIFICATION IN THE SWR1 COMPLEX</scope>
    <scope>FUNCTION OF THE SWR1 COMPLEX</scope>
    <scope>IDENTIFICATION BY MASS SPECTROMETRY</scope>
</reference>
<reference key="5">
    <citation type="journal article" date="2003" name="Nature">
        <title>Sequencing and comparison of yeast species to identify genes and regulatory elements.</title>
        <authorList>
            <person name="Kellis M."/>
            <person name="Patterson N."/>
            <person name="Endrizzi M."/>
            <person name="Birren B.W."/>
            <person name="Lander E.S."/>
        </authorList>
    </citation>
    <scope>IDENTIFICATION OF PROBABLE INITIATION SITE</scope>
</reference>
<reference key="6">
    <citation type="journal article" date="2003" name="Nature">
        <title>Global analysis of protein localization in budding yeast.</title>
        <authorList>
            <person name="Huh W.-K."/>
            <person name="Falvo J.V."/>
            <person name="Gerke L.C."/>
            <person name="Carroll A.S."/>
            <person name="Howson R.W."/>
            <person name="Weissman J.S."/>
            <person name="O'Shea E.K."/>
        </authorList>
    </citation>
    <scope>SUBCELLULAR LOCATION [LARGE SCALE ANALYSIS]</scope>
</reference>
<reference key="7">
    <citation type="journal article" date="2003" name="Nature">
        <title>Global analysis of protein expression in yeast.</title>
        <authorList>
            <person name="Ghaemmaghami S."/>
            <person name="Huh W.-K."/>
            <person name="Bower K."/>
            <person name="Howson R.W."/>
            <person name="Belle A."/>
            <person name="Dephoure N."/>
            <person name="O'Shea E.K."/>
            <person name="Weissman J.S."/>
        </authorList>
    </citation>
    <scope>LEVEL OF PROTEIN EXPRESSION [LARGE SCALE ANALYSIS]</scope>
</reference>
<reference key="8">
    <citation type="journal article" date="2004" name="PLoS Biol.">
        <title>A protein complex containing the conserved Swi2/Snf2-related ATPase Swr1p deposits histone variant H2A.Z into euchromatin.</title>
        <authorList>
            <person name="Kobor M.S."/>
            <person name="Venkatasubrahmanyam S."/>
            <person name="Meneghini M.D."/>
            <person name="Gin J.W."/>
            <person name="Jennings J.L."/>
            <person name="Link A.J."/>
            <person name="Madhani H.D."/>
            <person name="Rine J."/>
        </authorList>
    </citation>
    <scope>IDENTIFICATION IN THE SWR1 COMPLEX</scope>
    <scope>FUNCTION OF THE SWR1 COMPLEX</scope>
    <scope>IDENTIFICATION BY MASS SPECTROMETRY</scope>
</reference>
<reference key="9">
    <citation type="journal article" date="2004" name="Science">
        <title>ATP-driven exchange of histone H2AZ variant catalyzed by SWR1 chromatin remodeling complex.</title>
        <authorList>
            <person name="Mizuguchi G."/>
            <person name="Shen X."/>
            <person name="Landry J."/>
            <person name="Wu W.-H."/>
            <person name="Sen S."/>
            <person name="Wu C."/>
        </authorList>
    </citation>
    <scope>IDENTIFICATION IN THE SWR1 COMPLEX</scope>
    <scope>FUNCTION OF THE SWR1 COMPLEX</scope>
    <scope>IDENTIFICATION BY MASS SPECTROMETRY</scope>
</reference>
<reference key="10">
    <citation type="journal article" date="2009" name="Science">
        <title>Global analysis of Cdk1 substrate phosphorylation sites provides insights into evolution.</title>
        <authorList>
            <person name="Holt L.J."/>
            <person name="Tuch B.B."/>
            <person name="Villen J."/>
            <person name="Johnson A.D."/>
            <person name="Gygi S.P."/>
            <person name="Morgan D.O."/>
        </authorList>
    </citation>
    <scope>IDENTIFICATION BY MASS SPECTROMETRY [LARGE SCALE ANALYSIS]</scope>
</reference>
<name>SWC3_YEAST</name>
<proteinExistence type="evidence at protein level"/>
<evidence type="ECO:0000256" key="1">
    <source>
        <dbReference type="SAM" id="MobiDB-lite"/>
    </source>
</evidence>
<evidence type="ECO:0000269" key="2">
    <source>
    </source>
</evidence>
<evidence type="ECO:0000269" key="3">
    <source>
    </source>
</evidence>
<evidence type="ECO:0000269" key="4">
    <source>
    </source>
</evidence>
<evidence type="ECO:0000269" key="5">
    <source>
    </source>
</evidence>
<evidence type="ECO:0000269" key="6">
    <source>
    </source>
</evidence>
<evidence type="ECO:0000305" key="7"/>
<gene>
    <name type="primary">SWC3</name>
    <name type="synonym">FUN36</name>
    <name type="synonym">SWC1</name>
    <name type="ordered locus">YAL011W</name>
</gene>
<protein>
    <recommendedName>
        <fullName>SWR1-complex protein 3</fullName>
    </recommendedName>
</protein>
<dbReference type="EMBL" id="L05146">
    <property type="protein sequence ID" value="AAC04946.1"/>
    <property type="status" value="ALT_INIT"/>
    <property type="molecule type" value="Genomic_DNA"/>
</dbReference>
<dbReference type="EMBL" id="BK006935">
    <property type="protein sequence ID" value="DAA06977.1"/>
    <property type="molecule type" value="Genomic_DNA"/>
</dbReference>
<dbReference type="PIR" id="S36723">
    <property type="entry name" value="S36723"/>
</dbReference>
<dbReference type="RefSeq" id="NP_009391.2">
    <property type="nucleotide sequence ID" value="NM_001178156.1"/>
</dbReference>
<dbReference type="PDB" id="9B1E">
    <property type="method" value="EM"/>
    <property type="resolution" value="4.40 A"/>
    <property type="chains" value="K=1-625"/>
</dbReference>
<dbReference type="PDBsum" id="9B1E"/>
<dbReference type="EMDB" id="EMD-44075"/>
<dbReference type="SMR" id="P31376"/>
<dbReference type="BioGRID" id="31755">
    <property type="interactions" value="598"/>
</dbReference>
<dbReference type="ComplexPortal" id="CPX-2122">
    <property type="entry name" value="Swr1 chromatin remodelling complex"/>
</dbReference>
<dbReference type="DIP" id="DIP-2986N"/>
<dbReference type="FunCoup" id="P31376">
    <property type="interactions" value="170"/>
</dbReference>
<dbReference type="IntAct" id="P31376">
    <property type="interactions" value="26"/>
</dbReference>
<dbReference type="MINT" id="P31376"/>
<dbReference type="STRING" id="4932.YAL011W"/>
<dbReference type="GlyGen" id="P31376">
    <property type="glycosylation" value="1 site"/>
</dbReference>
<dbReference type="iPTMnet" id="P31376"/>
<dbReference type="PaxDb" id="4932-YAL011W"/>
<dbReference type="PeptideAtlas" id="P31376"/>
<dbReference type="EnsemblFungi" id="YAL011W_mRNA">
    <property type="protein sequence ID" value="YAL011W"/>
    <property type="gene ID" value="YAL011W"/>
</dbReference>
<dbReference type="GeneID" id="851222"/>
<dbReference type="KEGG" id="sce:YAL011W"/>
<dbReference type="AGR" id="SGD:S000000009"/>
<dbReference type="SGD" id="S000000009">
    <property type="gene designation" value="SWC3"/>
</dbReference>
<dbReference type="VEuPathDB" id="FungiDB:YAL011W"/>
<dbReference type="eggNOG" id="ENOG502QWM7">
    <property type="taxonomic scope" value="Eukaryota"/>
</dbReference>
<dbReference type="HOGENOM" id="CLU_008595_1_0_1"/>
<dbReference type="InParanoid" id="P31376"/>
<dbReference type="OMA" id="MQKMCDC"/>
<dbReference type="OrthoDB" id="4097064at2759"/>
<dbReference type="BioCyc" id="YEAST:G3O-28824-MONOMER"/>
<dbReference type="BioGRID-ORCS" id="851222">
    <property type="hits" value="1 hit in 10 CRISPR screens"/>
</dbReference>
<dbReference type="PRO" id="PR:P31376"/>
<dbReference type="Proteomes" id="UP000002311">
    <property type="component" value="Chromosome I"/>
</dbReference>
<dbReference type="RNAct" id="P31376">
    <property type="molecule type" value="protein"/>
</dbReference>
<dbReference type="GO" id="GO:0000785">
    <property type="term" value="C:chromatin"/>
    <property type="evidence" value="ECO:0000314"/>
    <property type="project" value="ComplexPortal"/>
</dbReference>
<dbReference type="GO" id="GO:0005739">
    <property type="term" value="C:mitochondrion"/>
    <property type="evidence" value="ECO:0007005"/>
    <property type="project" value="SGD"/>
</dbReference>
<dbReference type="GO" id="GO:0005634">
    <property type="term" value="C:nucleus"/>
    <property type="evidence" value="ECO:0007005"/>
    <property type="project" value="SGD"/>
</dbReference>
<dbReference type="GO" id="GO:0000812">
    <property type="term" value="C:Swr1 complex"/>
    <property type="evidence" value="ECO:0000314"/>
    <property type="project" value="SGD"/>
</dbReference>
<dbReference type="GO" id="GO:0140849">
    <property type="term" value="F:ATP-dependent H2AZ histone chaperone activity"/>
    <property type="evidence" value="ECO:0007669"/>
    <property type="project" value="InterPro"/>
</dbReference>
<dbReference type="GO" id="GO:0006338">
    <property type="term" value="P:chromatin remodeling"/>
    <property type="evidence" value="ECO:0000314"/>
    <property type="project" value="SGD"/>
</dbReference>
<dbReference type="GO" id="GO:0007029">
    <property type="term" value="P:endoplasmic reticulum organization"/>
    <property type="evidence" value="ECO:0000315"/>
    <property type="project" value="SGD"/>
</dbReference>
<dbReference type="GO" id="GO:0006355">
    <property type="term" value="P:regulation of DNA-templated transcription"/>
    <property type="evidence" value="ECO:0000303"/>
    <property type="project" value="ComplexPortal"/>
</dbReference>
<dbReference type="InterPro" id="IPR037651">
    <property type="entry name" value="Swc3"/>
</dbReference>
<dbReference type="PANTHER" id="PTHR28108">
    <property type="entry name" value="SWR1-COMPLEX PROTEIN 3"/>
    <property type="match status" value="1"/>
</dbReference>
<dbReference type="PANTHER" id="PTHR28108:SF1">
    <property type="entry name" value="SWR1-COMPLEX PROTEIN 3"/>
    <property type="match status" value="1"/>
</dbReference>
<dbReference type="Pfam" id="PF24707">
    <property type="entry name" value="Swc3"/>
    <property type="match status" value="1"/>
</dbReference>
<accession>P31376</accession>
<accession>D6VPK7</accession>
<comment type="function">
    <text evidence="4 5 6">Component of the SWR1 complex which mediates the ATP-dependent exchange of histone H2A for the H2A variant HZT1 leading to transcriptional regulation of selected genes by chromatin remodeling. Involved in chromosome stability.</text>
</comment>
<comment type="subunit">
    <text evidence="4 5 6">Component of the SWR1 chromatin remodeling complex composed of at least ACT1, ARP4, RVB1, RVB2, ARP6, YAF9, VPS71, VPS72, SWC3, SWC4, SWC5, SWC7 and SWR1, and perhaps BDF1.</text>
</comment>
<comment type="subcellular location">
    <subcellularLocation>
        <location evidence="2">Nucleus</location>
    </subcellularLocation>
</comment>
<comment type="miscellaneous">
    <text evidence="3">Present with 1380 molecules/cell in log phase SD medium.</text>
</comment>
<comment type="similarity">
    <text evidence="7">Belongs to the SWC3 family.</text>
</comment>
<comment type="sequence caution" evidence="7">
    <conflict type="erroneous initiation">
        <sequence resource="EMBL-CDS" id="AAC04946"/>
    </conflict>
</comment>